<feature type="chain" id="PRO_0000200367" description="Cytochrome b559 subunit beta">
    <location>
        <begin position="1"/>
        <end position="39"/>
    </location>
</feature>
<feature type="transmembrane region" description="Helical" evidence="1">
    <location>
        <begin position="14"/>
        <end position="30"/>
    </location>
</feature>
<feature type="binding site" description="axial binding residue" evidence="1">
    <location>
        <position position="18"/>
    </location>
    <ligand>
        <name>heme</name>
        <dbReference type="ChEBI" id="CHEBI:30413"/>
        <note>ligand shared with alpha subunit</note>
    </ligand>
    <ligandPart>
        <name>Fe</name>
        <dbReference type="ChEBI" id="CHEBI:18248"/>
    </ligandPart>
</feature>
<keyword id="KW-0150">Chloroplast</keyword>
<keyword id="KW-0249">Electron transport</keyword>
<keyword id="KW-0349">Heme</keyword>
<keyword id="KW-0408">Iron</keyword>
<keyword id="KW-0472">Membrane</keyword>
<keyword id="KW-0479">Metal-binding</keyword>
<keyword id="KW-0602">Photosynthesis</keyword>
<keyword id="KW-0604">Photosystem II</keyword>
<keyword id="KW-0934">Plastid</keyword>
<keyword id="KW-0793">Thylakoid</keyword>
<keyword id="KW-0812">Transmembrane</keyword>
<keyword id="KW-1133">Transmembrane helix</keyword>
<keyword id="KW-0813">Transport</keyword>
<proteinExistence type="inferred from homology"/>
<reference key="1">
    <citation type="submission" date="2002-07" db="EMBL/GenBank/DDBJ databases">
        <title>Parsing out signal and noise for seed-plant phylogenetic inference.</title>
        <authorList>
            <person name="Graham S.W."/>
            <person name="Rai H.S."/>
            <person name="Ikegami K."/>
            <person name="Reeves P.A."/>
            <person name="Olmstead R.G."/>
        </authorList>
    </citation>
    <scope>NUCLEOTIDE SEQUENCE [GENOMIC DNA]</scope>
</reference>
<sequence>MTIDRTYPIFTVRWLAVHGLAVPTVSFLGSISAMQFIQR</sequence>
<evidence type="ECO:0000255" key="1">
    <source>
        <dbReference type="HAMAP-Rule" id="MF_00643"/>
    </source>
</evidence>
<dbReference type="EMBL" id="AF528868">
    <property type="protein sequence ID" value="AAQ09272.1"/>
    <property type="molecule type" value="Genomic_DNA"/>
</dbReference>
<dbReference type="SMR" id="Q6EYV1"/>
<dbReference type="GO" id="GO:0009535">
    <property type="term" value="C:chloroplast thylakoid membrane"/>
    <property type="evidence" value="ECO:0007669"/>
    <property type="project" value="UniProtKB-SubCell"/>
</dbReference>
<dbReference type="GO" id="GO:0009539">
    <property type="term" value="C:photosystem II reaction center"/>
    <property type="evidence" value="ECO:0007669"/>
    <property type="project" value="InterPro"/>
</dbReference>
<dbReference type="GO" id="GO:0009055">
    <property type="term" value="F:electron transfer activity"/>
    <property type="evidence" value="ECO:0007669"/>
    <property type="project" value="UniProtKB-UniRule"/>
</dbReference>
<dbReference type="GO" id="GO:0020037">
    <property type="term" value="F:heme binding"/>
    <property type="evidence" value="ECO:0007669"/>
    <property type="project" value="InterPro"/>
</dbReference>
<dbReference type="GO" id="GO:0005506">
    <property type="term" value="F:iron ion binding"/>
    <property type="evidence" value="ECO:0007669"/>
    <property type="project" value="UniProtKB-UniRule"/>
</dbReference>
<dbReference type="GO" id="GO:0009767">
    <property type="term" value="P:photosynthetic electron transport chain"/>
    <property type="evidence" value="ECO:0007669"/>
    <property type="project" value="InterPro"/>
</dbReference>
<dbReference type="HAMAP" id="MF_00643">
    <property type="entry name" value="PSII_PsbF"/>
    <property type="match status" value="1"/>
</dbReference>
<dbReference type="InterPro" id="IPR006241">
    <property type="entry name" value="PSII_cyt_b559_bsu"/>
</dbReference>
<dbReference type="InterPro" id="IPR006216">
    <property type="entry name" value="PSII_cyt_b559_CS"/>
</dbReference>
<dbReference type="InterPro" id="IPR013081">
    <property type="entry name" value="PSII_cyt_b559_N"/>
</dbReference>
<dbReference type="NCBIfam" id="TIGR01333">
    <property type="entry name" value="cyt_b559_beta"/>
    <property type="match status" value="1"/>
</dbReference>
<dbReference type="Pfam" id="PF00283">
    <property type="entry name" value="Cytochrom_B559"/>
    <property type="match status" value="1"/>
</dbReference>
<dbReference type="PIRSF" id="PIRSF000037">
    <property type="entry name" value="PsbF"/>
    <property type="match status" value="1"/>
</dbReference>
<dbReference type="SUPFAM" id="SSF161045">
    <property type="entry name" value="Cytochrome b559 subunits"/>
    <property type="match status" value="1"/>
</dbReference>
<dbReference type="PROSITE" id="PS00537">
    <property type="entry name" value="CYTOCHROME_B559"/>
    <property type="match status" value="1"/>
</dbReference>
<gene>
    <name evidence="1" type="primary">psbF</name>
</gene>
<protein>
    <recommendedName>
        <fullName evidence="1">Cytochrome b559 subunit beta</fullName>
    </recommendedName>
    <alternativeName>
        <fullName evidence="1">PSII reaction center subunit VI</fullName>
    </alternativeName>
</protein>
<organism>
    <name type="scientific">Canella winterana</name>
    <name type="common">Wild cinnamon</name>
    <name type="synonym">Laurus winterana</name>
    <dbReference type="NCBI Taxonomy" id="3426"/>
    <lineage>
        <taxon>Eukaryota</taxon>
        <taxon>Viridiplantae</taxon>
        <taxon>Streptophyta</taxon>
        <taxon>Embryophyta</taxon>
        <taxon>Tracheophyta</taxon>
        <taxon>Spermatophyta</taxon>
        <taxon>Magnoliopsida</taxon>
        <taxon>Magnoliidae</taxon>
        <taxon>Canellales</taxon>
        <taxon>Canellaceae</taxon>
        <taxon>Canella</taxon>
    </lineage>
</organism>
<name>PSBF_CANWI</name>
<comment type="function">
    <text evidence="1">This b-type cytochrome is tightly associated with the reaction center of photosystem II (PSII). PSII is a light-driven water:plastoquinone oxidoreductase that uses light energy to abstract electrons from H(2)O, generating O(2) and a proton gradient subsequently used for ATP formation. It consists of a core antenna complex that captures photons, and an electron transfer chain that converts photonic excitation into a charge separation.</text>
</comment>
<comment type="cofactor">
    <cofactor evidence="1">
        <name>heme b</name>
        <dbReference type="ChEBI" id="CHEBI:60344"/>
    </cofactor>
    <text evidence="1">With its partner (PsbE) binds heme. PSII binds additional chlorophylls, carotenoids and specific lipids.</text>
</comment>
<comment type="subunit">
    <text evidence="1">Heterodimer of an alpha subunit and a beta subunit. PSII is composed of 1 copy each of membrane proteins PsbA, PsbB, PsbC, PsbD, PsbE, PsbF, PsbH, PsbI, PsbJ, PsbK, PsbL, PsbM, PsbT, PsbX, PsbY, PsbZ, Psb30/Ycf12, at least 3 peripheral proteins of the oxygen-evolving complex and a large number of cofactors. It forms dimeric complexes.</text>
</comment>
<comment type="subcellular location">
    <subcellularLocation>
        <location evidence="1">Plastid</location>
        <location evidence="1">Chloroplast thylakoid membrane</location>
        <topology evidence="1">Single-pass membrane protein</topology>
    </subcellularLocation>
</comment>
<comment type="similarity">
    <text evidence="1">Belongs to the PsbE/PsbF family.</text>
</comment>
<accession>Q6EYV1</accession>
<geneLocation type="chloroplast"/>